<sequence length="336" mass="37174">MIEADRLISAGTTLPEDVADRAIRPKLLEEYVGQPQVRSQMEIFIKAAKLRGDALDHLLIFGPPGLGKTTLANIVANEMGVNLRTTSGPVLEKAGDLAAMLTNLEPHDVLFIDEIHRLSPVVEEVLYPAMEDYQLDIMIGEGPAARSIKIDLPPFTLIGATTRAGSLTSPLRDRFGIVQRLEFYQVPDLQYIVSRSARFMGLEMSDDGALEVARRARGTPRIANRLLRRVRDFAEVKHDGTISADIAAQALDMLNVDAEGFDYMDRKLLLAVIDKFFGGPVGLDNLAAAIGEERETIEDVLEPYLIQQGFLQRTPRGRMATTRAWNHFGITPPEMP</sequence>
<organism>
    <name type="scientific">Escherichia coli O9:H4 (strain HS)</name>
    <dbReference type="NCBI Taxonomy" id="331112"/>
    <lineage>
        <taxon>Bacteria</taxon>
        <taxon>Pseudomonadati</taxon>
        <taxon>Pseudomonadota</taxon>
        <taxon>Gammaproteobacteria</taxon>
        <taxon>Enterobacterales</taxon>
        <taxon>Enterobacteriaceae</taxon>
        <taxon>Escherichia</taxon>
    </lineage>
</organism>
<dbReference type="EC" id="3.6.4.-" evidence="1"/>
<dbReference type="EMBL" id="CP000802">
    <property type="protein sequence ID" value="ABV06264.1"/>
    <property type="molecule type" value="Genomic_DNA"/>
</dbReference>
<dbReference type="RefSeq" id="WP_000568519.1">
    <property type="nucleotide sequence ID" value="NC_009800.1"/>
</dbReference>
<dbReference type="SMR" id="A8A160"/>
<dbReference type="GeneID" id="75202735"/>
<dbReference type="KEGG" id="ecx:EcHS_A1953"/>
<dbReference type="HOGENOM" id="CLU_055599_1_0_6"/>
<dbReference type="GO" id="GO:0005737">
    <property type="term" value="C:cytoplasm"/>
    <property type="evidence" value="ECO:0007669"/>
    <property type="project" value="UniProtKB-SubCell"/>
</dbReference>
<dbReference type="GO" id="GO:0048476">
    <property type="term" value="C:Holliday junction resolvase complex"/>
    <property type="evidence" value="ECO:0007669"/>
    <property type="project" value="UniProtKB-UniRule"/>
</dbReference>
<dbReference type="GO" id="GO:0005524">
    <property type="term" value="F:ATP binding"/>
    <property type="evidence" value="ECO:0007669"/>
    <property type="project" value="UniProtKB-UniRule"/>
</dbReference>
<dbReference type="GO" id="GO:0016887">
    <property type="term" value="F:ATP hydrolysis activity"/>
    <property type="evidence" value="ECO:0007669"/>
    <property type="project" value="InterPro"/>
</dbReference>
<dbReference type="GO" id="GO:0000400">
    <property type="term" value="F:four-way junction DNA binding"/>
    <property type="evidence" value="ECO:0007669"/>
    <property type="project" value="UniProtKB-UniRule"/>
</dbReference>
<dbReference type="GO" id="GO:0009378">
    <property type="term" value="F:four-way junction helicase activity"/>
    <property type="evidence" value="ECO:0007669"/>
    <property type="project" value="InterPro"/>
</dbReference>
<dbReference type="GO" id="GO:0006310">
    <property type="term" value="P:DNA recombination"/>
    <property type="evidence" value="ECO:0007669"/>
    <property type="project" value="UniProtKB-UniRule"/>
</dbReference>
<dbReference type="GO" id="GO:0006281">
    <property type="term" value="P:DNA repair"/>
    <property type="evidence" value="ECO:0007669"/>
    <property type="project" value="UniProtKB-UniRule"/>
</dbReference>
<dbReference type="GO" id="GO:0009432">
    <property type="term" value="P:SOS response"/>
    <property type="evidence" value="ECO:0007669"/>
    <property type="project" value="UniProtKB-UniRule"/>
</dbReference>
<dbReference type="CDD" id="cd00009">
    <property type="entry name" value="AAA"/>
    <property type="match status" value="1"/>
</dbReference>
<dbReference type="FunFam" id="1.10.10.10:FF:000086">
    <property type="entry name" value="Holliday junction ATP-dependent DNA helicase RuvB"/>
    <property type="match status" value="1"/>
</dbReference>
<dbReference type="FunFam" id="1.10.8.60:FF:000023">
    <property type="entry name" value="Holliday junction ATP-dependent DNA helicase RuvB"/>
    <property type="match status" value="1"/>
</dbReference>
<dbReference type="FunFam" id="3.40.50.300:FF:000073">
    <property type="entry name" value="Holliday junction ATP-dependent DNA helicase RuvB"/>
    <property type="match status" value="1"/>
</dbReference>
<dbReference type="Gene3D" id="1.10.8.60">
    <property type="match status" value="1"/>
</dbReference>
<dbReference type="Gene3D" id="3.40.50.300">
    <property type="entry name" value="P-loop containing nucleotide triphosphate hydrolases"/>
    <property type="match status" value="1"/>
</dbReference>
<dbReference type="Gene3D" id="1.10.10.10">
    <property type="entry name" value="Winged helix-like DNA-binding domain superfamily/Winged helix DNA-binding domain"/>
    <property type="match status" value="1"/>
</dbReference>
<dbReference type="HAMAP" id="MF_00016">
    <property type="entry name" value="DNA_HJ_migration_RuvB"/>
    <property type="match status" value="1"/>
</dbReference>
<dbReference type="InterPro" id="IPR003593">
    <property type="entry name" value="AAA+_ATPase"/>
</dbReference>
<dbReference type="InterPro" id="IPR041445">
    <property type="entry name" value="AAA_lid_4"/>
</dbReference>
<dbReference type="InterPro" id="IPR004605">
    <property type="entry name" value="DNA_helicase_Holl-junc_RuvB"/>
</dbReference>
<dbReference type="InterPro" id="IPR027417">
    <property type="entry name" value="P-loop_NTPase"/>
</dbReference>
<dbReference type="InterPro" id="IPR008824">
    <property type="entry name" value="RuvB-like_N"/>
</dbReference>
<dbReference type="InterPro" id="IPR008823">
    <property type="entry name" value="RuvB_C"/>
</dbReference>
<dbReference type="InterPro" id="IPR036388">
    <property type="entry name" value="WH-like_DNA-bd_sf"/>
</dbReference>
<dbReference type="InterPro" id="IPR036390">
    <property type="entry name" value="WH_DNA-bd_sf"/>
</dbReference>
<dbReference type="NCBIfam" id="NF000868">
    <property type="entry name" value="PRK00080.1"/>
    <property type="match status" value="1"/>
</dbReference>
<dbReference type="NCBIfam" id="TIGR00635">
    <property type="entry name" value="ruvB"/>
    <property type="match status" value="1"/>
</dbReference>
<dbReference type="PANTHER" id="PTHR42848">
    <property type="match status" value="1"/>
</dbReference>
<dbReference type="PANTHER" id="PTHR42848:SF1">
    <property type="entry name" value="HOLLIDAY JUNCTION BRANCH MIGRATION COMPLEX SUBUNIT RUVB"/>
    <property type="match status" value="1"/>
</dbReference>
<dbReference type="Pfam" id="PF17864">
    <property type="entry name" value="AAA_lid_4"/>
    <property type="match status" value="1"/>
</dbReference>
<dbReference type="Pfam" id="PF05491">
    <property type="entry name" value="RuvB_C"/>
    <property type="match status" value="1"/>
</dbReference>
<dbReference type="Pfam" id="PF05496">
    <property type="entry name" value="RuvB_N"/>
    <property type="match status" value="1"/>
</dbReference>
<dbReference type="SMART" id="SM00382">
    <property type="entry name" value="AAA"/>
    <property type="match status" value="1"/>
</dbReference>
<dbReference type="SUPFAM" id="SSF52540">
    <property type="entry name" value="P-loop containing nucleoside triphosphate hydrolases"/>
    <property type="match status" value="1"/>
</dbReference>
<dbReference type="SUPFAM" id="SSF46785">
    <property type="entry name" value="Winged helix' DNA-binding domain"/>
    <property type="match status" value="1"/>
</dbReference>
<accession>A8A160</accession>
<comment type="function">
    <text evidence="1">The RuvA-RuvB-RuvC complex processes Holliday junction (HJ) DNA during genetic recombination and DNA repair, while the RuvA-RuvB complex plays an important role in the rescue of blocked DNA replication forks via replication fork reversal (RFR). RuvA specifically binds to HJ cruciform DNA, conferring on it an open structure. The RuvB hexamer acts as an ATP-dependent pump, pulling dsDNA into and through the RuvAB complex. RuvB forms 2 homohexamers on either side of HJ DNA bound by 1 or 2 RuvA tetramers; 4 subunits per hexamer contact DNA at a time. Coordinated motions by a converter formed by DNA-disengaged RuvB subunits stimulates ATP hydrolysis and nucleotide exchange. Immobilization of the converter enables RuvB to convert the ATP-contained energy into a lever motion, pulling 2 nucleotides of DNA out of the RuvA tetramer per ATP hydrolyzed, thus driving DNA branch migration. The RuvB motors rotate together with the DNA substrate, which together with the progressing nucleotide cycle form the mechanistic basis for DNA recombination by continuous HJ branch migration. Branch migration allows RuvC to scan DNA until it finds its consensus sequence, where it cleaves and resolves cruciform DNA.</text>
</comment>
<comment type="catalytic activity">
    <reaction evidence="1">
        <text>ATP + H2O = ADP + phosphate + H(+)</text>
        <dbReference type="Rhea" id="RHEA:13065"/>
        <dbReference type="ChEBI" id="CHEBI:15377"/>
        <dbReference type="ChEBI" id="CHEBI:15378"/>
        <dbReference type="ChEBI" id="CHEBI:30616"/>
        <dbReference type="ChEBI" id="CHEBI:43474"/>
        <dbReference type="ChEBI" id="CHEBI:456216"/>
    </reaction>
</comment>
<comment type="subunit">
    <text evidence="1">Homohexamer. Forms an RuvA(8)-RuvB(12)-Holliday junction (HJ) complex. HJ DNA is sandwiched between 2 RuvA tetramers; dsDNA enters through RuvA and exits via RuvB. An RuvB hexamer assembles on each DNA strand where it exits the tetramer. Each RuvB hexamer is contacted by two RuvA subunits (via domain III) on 2 adjacent RuvB subunits; this complex drives branch migration. In the full resolvosome a probable DNA-RuvA(4)-RuvB(12)-RuvC(2) complex forms which resolves the HJ.</text>
</comment>
<comment type="subcellular location">
    <subcellularLocation>
        <location evidence="1">Cytoplasm</location>
    </subcellularLocation>
</comment>
<comment type="domain">
    <text evidence="1">Has 3 domains, the large (RuvB-L) and small ATPase (RuvB-S) domains and the C-terminal head (RuvB-H) domain. The head domain binds DNA, while the ATPase domains jointly bind ATP, ADP or are empty depending on the state of the subunit in the translocation cycle. During a single DNA translocation step the structure of each domain remains the same, but their relative positions change.</text>
</comment>
<comment type="similarity">
    <text evidence="1">Belongs to the RuvB family.</text>
</comment>
<evidence type="ECO:0000255" key="1">
    <source>
        <dbReference type="HAMAP-Rule" id="MF_00016"/>
    </source>
</evidence>
<proteinExistence type="inferred from homology"/>
<protein>
    <recommendedName>
        <fullName evidence="1">Holliday junction branch migration complex subunit RuvB</fullName>
        <ecNumber evidence="1">3.6.4.-</ecNumber>
    </recommendedName>
</protein>
<name>RUVB_ECOHS</name>
<feature type="chain" id="PRO_1000057142" description="Holliday junction branch migration complex subunit RuvB">
    <location>
        <begin position="1"/>
        <end position="336"/>
    </location>
</feature>
<feature type="region of interest" description="Large ATPase domain (RuvB-L)" evidence="1">
    <location>
        <begin position="4"/>
        <end position="184"/>
    </location>
</feature>
<feature type="region of interest" description="Small ATPAse domain (RuvB-S)" evidence="1">
    <location>
        <begin position="185"/>
        <end position="255"/>
    </location>
</feature>
<feature type="region of interest" description="Head domain (RuvB-H)" evidence="1">
    <location>
        <begin position="258"/>
        <end position="336"/>
    </location>
</feature>
<feature type="binding site" evidence="1">
    <location>
        <position position="23"/>
    </location>
    <ligand>
        <name>ATP</name>
        <dbReference type="ChEBI" id="CHEBI:30616"/>
    </ligand>
</feature>
<feature type="binding site" evidence="1">
    <location>
        <position position="24"/>
    </location>
    <ligand>
        <name>ATP</name>
        <dbReference type="ChEBI" id="CHEBI:30616"/>
    </ligand>
</feature>
<feature type="binding site" evidence="1">
    <location>
        <position position="65"/>
    </location>
    <ligand>
        <name>ATP</name>
        <dbReference type="ChEBI" id="CHEBI:30616"/>
    </ligand>
</feature>
<feature type="binding site" evidence="1">
    <location>
        <position position="68"/>
    </location>
    <ligand>
        <name>ATP</name>
        <dbReference type="ChEBI" id="CHEBI:30616"/>
    </ligand>
</feature>
<feature type="binding site" evidence="1">
    <location>
        <position position="69"/>
    </location>
    <ligand>
        <name>ATP</name>
        <dbReference type="ChEBI" id="CHEBI:30616"/>
    </ligand>
</feature>
<feature type="binding site" evidence="1">
    <location>
        <position position="69"/>
    </location>
    <ligand>
        <name>Mg(2+)</name>
        <dbReference type="ChEBI" id="CHEBI:18420"/>
    </ligand>
</feature>
<feature type="binding site" evidence="1">
    <location>
        <position position="70"/>
    </location>
    <ligand>
        <name>ATP</name>
        <dbReference type="ChEBI" id="CHEBI:30616"/>
    </ligand>
</feature>
<feature type="binding site" evidence="1">
    <location>
        <begin position="131"/>
        <end position="133"/>
    </location>
    <ligand>
        <name>ATP</name>
        <dbReference type="ChEBI" id="CHEBI:30616"/>
    </ligand>
</feature>
<feature type="binding site" evidence="1">
    <location>
        <position position="174"/>
    </location>
    <ligand>
        <name>ATP</name>
        <dbReference type="ChEBI" id="CHEBI:30616"/>
    </ligand>
</feature>
<feature type="binding site" evidence="1">
    <location>
        <position position="184"/>
    </location>
    <ligand>
        <name>ATP</name>
        <dbReference type="ChEBI" id="CHEBI:30616"/>
    </ligand>
</feature>
<feature type="binding site" evidence="1">
    <location>
        <position position="221"/>
    </location>
    <ligand>
        <name>ATP</name>
        <dbReference type="ChEBI" id="CHEBI:30616"/>
    </ligand>
</feature>
<feature type="binding site" evidence="1">
    <location>
        <position position="294"/>
    </location>
    <ligand>
        <name>DNA</name>
        <dbReference type="ChEBI" id="CHEBI:16991"/>
    </ligand>
</feature>
<feature type="binding site" evidence="1">
    <location>
        <position position="313"/>
    </location>
    <ligand>
        <name>DNA</name>
        <dbReference type="ChEBI" id="CHEBI:16991"/>
    </ligand>
</feature>
<feature type="binding site" evidence="1">
    <location>
        <position position="318"/>
    </location>
    <ligand>
        <name>DNA</name>
        <dbReference type="ChEBI" id="CHEBI:16991"/>
    </ligand>
</feature>
<gene>
    <name evidence="1" type="primary">ruvB</name>
    <name type="ordered locus">EcHS_A1953</name>
</gene>
<reference key="1">
    <citation type="journal article" date="2008" name="J. Bacteriol.">
        <title>The pangenome structure of Escherichia coli: comparative genomic analysis of E. coli commensal and pathogenic isolates.</title>
        <authorList>
            <person name="Rasko D.A."/>
            <person name="Rosovitz M.J."/>
            <person name="Myers G.S.A."/>
            <person name="Mongodin E.F."/>
            <person name="Fricke W.F."/>
            <person name="Gajer P."/>
            <person name="Crabtree J."/>
            <person name="Sebaihia M."/>
            <person name="Thomson N.R."/>
            <person name="Chaudhuri R."/>
            <person name="Henderson I.R."/>
            <person name="Sperandio V."/>
            <person name="Ravel J."/>
        </authorList>
    </citation>
    <scope>NUCLEOTIDE SEQUENCE [LARGE SCALE GENOMIC DNA]</scope>
    <source>
        <strain>HS</strain>
    </source>
</reference>
<keyword id="KW-0067">ATP-binding</keyword>
<keyword id="KW-0963">Cytoplasm</keyword>
<keyword id="KW-0227">DNA damage</keyword>
<keyword id="KW-0233">DNA recombination</keyword>
<keyword id="KW-0234">DNA repair</keyword>
<keyword id="KW-0238">DNA-binding</keyword>
<keyword id="KW-0378">Hydrolase</keyword>
<keyword id="KW-0547">Nucleotide-binding</keyword>
<keyword id="KW-0742">SOS response</keyword>